<evidence type="ECO:0000255" key="1">
    <source>
        <dbReference type="HAMAP-Rule" id="MF_00539"/>
    </source>
</evidence>
<evidence type="ECO:0000256" key="2">
    <source>
        <dbReference type="SAM" id="MobiDB-lite"/>
    </source>
</evidence>
<evidence type="ECO:0000305" key="3"/>
<protein>
    <recommendedName>
        <fullName evidence="1">Large ribosomal subunit protein bL27</fullName>
    </recommendedName>
    <alternativeName>
        <fullName evidence="3">50S ribosomal protein L27</fullName>
    </alternativeName>
</protein>
<dbReference type="EMBL" id="CP000830">
    <property type="protein sequence ID" value="ABV93203.1"/>
    <property type="molecule type" value="Genomic_DNA"/>
</dbReference>
<dbReference type="RefSeq" id="WP_012178133.1">
    <property type="nucleotide sequence ID" value="NC_009952.1"/>
</dbReference>
<dbReference type="SMR" id="A8LK04"/>
<dbReference type="STRING" id="398580.Dshi_1461"/>
<dbReference type="KEGG" id="dsh:Dshi_1461"/>
<dbReference type="eggNOG" id="COG0211">
    <property type="taxonomic scope" value="Bacteria"/>
</dbReference>
<dbReference type="HOGENOM" id="CLU_095424_4_1_5"/>
<dbReference type="OrthoDB" id="9803474at2"/>
<dbReference type="Proteomes" id="UP000006833">
    <property type="component" value="Chromosome"/>
</dbReference>
<dbReference type="GO" id="GO:0022625">
    <property type="term" value="C:cytosolic large ribosomal subunit"/>
    <property type="evidence" value="ECO:0007669"/>
    <property type="project" value="TreeGrafter"/>
</dbReference>
<dbReference type="GO" id="GO:0003735">
    <property type="term" value="F:structural constituent of ribosome"/>
    <property type="evidence" value="ECO:0007669"/>
    <property type="project" value="InterPro"/>
</dbReference>
<dbReference type="GO" id="GO:0006412">
    <property type="term" value="P:translation"/>
    <property type="evidence" value="ECO:0007669"/>
    <property type="project" value="UniProtKB-UniRule"/>
</dbReference>
<dbReference type="FunFam" id="2.40.50.100:FF:000020">
    <property type="entry name" value="50S ribosomal protein L27"/>
    <property type="match status" value="1"/>
</dbReference>
<dbReference type="Gene3D" id="2.40.50.100">
    <property type="match status" value="1"/>
</dbReference>
<dbReference type="HAMAP" id="MF_00539">
    <property type="entry name" value="Ribosomal_bL27"/>
    <property type="match status" value="1"/>
</dbReference>
<dbReference type="InterPro" id="IPR001684">
    <property type="entry name" value="Ribosomal_bL27"/>
</dbReference>
<dbReference type="InterPro" id="IPR018261">
    <property type="entry name" value="Ribosomal_bL27_CS"/>
</dbReference>
<dbReference type="NCBIfam" id="TIGR00062">
    <property type="entry name" value="L27"/>
    <property type="match status" value="1"/>
</dbReference>
<dbReference type="PANTHER" id="PTHR15893:SF0">
    <property type="entry name" value="LARGE RIBOSOMAL SUBUNIT PROTEIN BL27M"/>
    <property type="match status" value="1"/>
</dbReference>
<dbReference type="PANTHER" id="PTHR15893">
    <property type="entry name" value="RIBOSOMAL PROTEIN L27"/>
    <property type="match status" value="1"/>
</dbReference>
<dbReference type="Pfam" id="PF01016">
    <property type="entry name" value="Ribosomal_L27"/>
    <property type="match status" value="1"/>
</dbReference>
<dbReference type="PRINTS" id="PR00063">
    <property type="entry name" value="RIBOSOMALL27"/>
</dbReference>
<dbReference type="SUPFAM" id="SSF110324">
    <property type="entry name" value="Ribosomal L27 protein-like"/>
    <property type="match status" value="1"/>
</dbReference>
<dbReference type="PROSITE" id="PS00831">
    <property type="entry name" value="RIBOSOMAL_L27"/>
    <property type="match status" value="1"/>
</dbReference>
<gene>
    <name evidence="1" type="primary">rpmA</name>
    <name type="ordered locus">Dshi_1461</name>
</gene>
<name>RL27_DINSH</name>
<reference key="1">
    <citation type="journal article" date="2010" name="ISME J.">
        <title>The complete genome sequence of the algal symbiont Dinoroseobacter shibae: a hitchhiker's guide to life in the sea.</title>
        <authorList>
            <person name="Wagner-Dobler I."/>
            <person name="Ballhausen B."/>
            <person name="Berger M."/>
            <person name="Brinkhoff T."/>
            <person name="Buchholz I."/>
            <person name="Bunk B."/>
            <person name="Cypionka H."/>
            <person name="Daniel R."/>
            <person name="Drepper T."/>
            <person name="Gerdts G."/>
            <person name="Hahnke S."/>
            <person name="Han C."/>
            <person name="Jahn D."/>
            <person name="Kalhoefer D."/>
            <person name="Kiss H."/>
            <person name="Klenk H.P."/>
            <person name="Kyrpides N."/>
            <person name="Liebl W."/>
            <person name="Liesegang H."/>
            <person name="Meincke L."/>
            <person name="Pati A."/>
            <person name="Petersen J."/>
            <person name="Piekarski T."/>
            <person name="Pommerenke C."/>
            <person name="Pradella S."/>
            <person name="Pukall R."/>
            <person name="Rabus R."/>
            <person name="Stackebrandt E."/>
            <person name="Thole S."/>
            <person name="Thompson L."/>
            <person name="Tielen P."/>
            <person name="Tomasch J."/>
            <person name="von Jan M."/>
            <person name="Wanphrut N."/>
            <person name="Wichels A."/>
            <person name="Zech H."/>
            <person name="Simon M."/>
        </authorList>
    </citation>
    <scope>NUCLEOTIDE SEQUENCE [LARGE SCALE GENOMIC DNA]</scope>
    <source>
        <strain>DSM 16493 / NCIMB 14021 / DFL 12</strain>
    </source>
</reference>
<sequence>MAHKKAGGSSRNGRDSAGRRLGVKKFGGETVIPGNIILRQRGTKWWPGDNVGMGKDHTLFATVEGNVSFKKGFKGRTFVSVLPVAEAAE</sequence>
<accession>A8LK04</accession>
<proteinExistence type="inferred from homology"/>
<comment type="similarity">
    <text evidence="1">Belongs to the bacterial ribosomal protein bL27 family.</text>
</comment>
<organism>
    <name type="scientific">Dinoroseobacter shibae (strain DSM 16493 / NCIMB 14021 / DFL 12)</name>
    <dbReference type="NCBI Taxonomy" id="398580"/>
    <lineage>
        <taxon>Bacteria</taxon>
        <taxon>Pseudomonadati</taxon>
        <taxon>Pseudomonadota</taxon>
        <taxon>Alphaproteobacteria</taxon>
        <taxon>Rhodobacterales</taxon>
        <taxon>Roseobacteraceae</taxon>
        <taxon>Dinoroseobacter</taxon>
    </lineage>
</organism>
<feature type="chain" id="PRO_1000081887" description="Large ribosomal subunit protein bL27">
    <location>
        <begin position="1"/>
        <end position="89"/>
    </location>
</feature>
<feature type="region of interest" description="Disordered" evidence="2">
    <location>
        <begin position="1"/>
        <end position="22"/>
    </location>
</feature>
<keyword id="KW-1185">Reference proteome</keyword>
<keyword id="KW-0687">Ribonucleoprotein</keyword>
<keyword id="KW-0689">Ribosomal protein</keyword>